<proteinExistence type="inferred from homology"/>
<dbReference type="EC" id="1.1.1.298" evidence="1"/>
<dbReference type="EMBL" id="CP000266">
    <property type="protein sequence ID" value="ABF03239.1"/>
    <property type="molecule type" value="Genomic_DNA"/>
</dbReference>
<dbReference type="RefSeq" id="WP_001001165.1">
    <property type="nucleotide sequence ID" value="NC_008258.1"/>
</dbReference>
<dbReference type="SMR" id="Q0T626"/>
<dbReference type="KEGG" id="sfv:SFV_1020"/>
<dbReference type="HOGENOM" id="CLU_084441_0_0_6"/>
<dbReference type="Proteomes" id="UP000000659">
    <property type="component" value="Chromosome"/>
</dbReference>
<dbReference type="GO" id="GO:0035527">
    <property type="term" value="F:3-hydroxypropionate dehydrogenase (NADP+) activity"/>
    <property type="evidence" value="ECO:0007669"/>
    <property type="project" value="UniProtKB-UniRule"/>
</dbReference>
<dbReference type="GO" id="GO:0019740">
    <property type="term" value="P:nitrogen utilization"/>
    <property type="evidence" value="ECO:0007669"/>
    <property type="project" value="UniProtKB-UniRule"/>
</dbReference>
<dbReference type="GO" id="GO:0006212">
    <property type="term" value="P:uracil catabolic process"/>
    <property type="evidence" value="ECO:0007669"/>
    <property type="project" value="UniProtKB-UniRule"/>
</dbReference>
<dbReference type="CDD" id="cd02148">
    <property type="entry name" value="RutE-like"/>
    <property type="match status" value="1"/>
</dbReference>
<dbReference type="FunFam" id="3.40.109.10:FF:000003">
    <property type="entry name" value="Probable malonic semialdehyde reductase RutE"/>
    <property type="match status" value="1"/>
</dbReference>
<dbReference type="Gene3D" id="3.40.109.10">
    <property type="entry name" value="NADH Oxidase"/>
    <property type="match status" value="1"/>
</dbReference>
<dbReference type="HAMAP" id="MF_01204">
    <property type="entry name" value="Oxidoreductase_RutE_HadB"/>
    <property type="match status" value="1"/>
</dbReference>
<dbReference type="InterPro" id="IPR029479">
    <property type="entry name" value="Nitroreductase"/>
</dbReference>
<dbReference type="InterPro" id="IPR000415">
    <property type="entry name" value="Nitroreductase-like"/>
</dbReference>
<dbReference type="InterPro" id="IPR050461">
    <property type="entry name" value="Nitroreductase_HadB/RutE"/>
</dbReference>
<dbReference type="InterPro" id="IPR023936">
    <property type="entry name" value="RutE-like"/>
</dbReference>
<dbReference type="NCBIfam" id="NF003768">
    <property type="entry name" value="PRK05365.1"/>
    <property type="match status" value="1"/>
</dbReference>
<dbReference type="PANTHER" id="PTHR43543">
    <property type="entry name" value="MALONIC SEMIALDEHYDE REDUCTASE RUTE-RELATED"/>
    <property type="match status" value="1"/>
</dbReference>
<dbReference type="PANTHER" id="PTHR43543:SF1">
    <property type="entry name" value="MALONIC SEMIALDEHYDE REDUCTASE RUTE-RELATED"/>
    <property type="match status" value="1"/>
</dbReference>
<dbReference type="Pfam" id="PF00881">
    <property type="entry name" value="Nitroreductase"/>
    <property type="match status" value="1"/>
</dbReference>
<dbReference type="SUPFAM" id="SSF55469">
    <property type="entry name" value="FMN-dependent nitroreductase-like"/>
    <property type="match status" value="1"/>
</dbReference>
<feature type="chain" id="PRO_1000066146" description="Probable malonic semialdehyde reductase RutE">
    <location>
        <begin position="1"/>
        <end position="196"/>
    </location>
</feature>
<keyword id="KW-0285">Flavoprotein</keyword>
<keyword id="KW-0288">FMN</keyword>
<keyword id="KW-0520">NAD</keyword>
<keyword id="KW-0521">NADP</keyword>
<keyword id="KW-0560">Oxidoreductase</keyword>
<name>RUTE_SHIF8</name>
<gene>
    <name evidence="1" type="primary">rutE</name>
    <name type="ordered locus">SFV_1020</name>
</gene>
<evidence type="ECO:0000255" key="1">
    <source>
        <dbReference type="HAMAP-Rule" id="MF_01204"/>
    </source>
</evidence>
<sequence length="196" mass="21508">MNEAVSPGALSTLFTDARTHNGWRETPVSDETLQELYALMKWGPTSANCSPARIVFIRTAEGKERLRPALSSGNLQKTLTAPVTAIVAWDSEFYERLPLLFPHGDARSWFTSSPQLAEETAFRNSSMQAAYLIVACRALGLDTGPMSGFDRQHVDDAFFAGSTLKSNLLINIGYGDSSKLFARLPRLSFEEACGLL</sequence>
<comment type="function">
    <text evidence="1">May reduce toxic product malonic semialdehyde to 3-hydroxypropionic acid, which is excreted.</text>
</comment>
<comment type="catalytic activity">
    <reaction evidence="1">
        <text>3-hydroxypropanoate + NADP(+) = 3-oxopropanoate + NADPH + H(+)</text>
        <dbReference type="Rhea" id="RHEA:26438"/>
        <dbReference type="ChEBI" id="CHEBI:15378"/>
        <dbReference type="ChEBI" id="CHEBI:16510"/>
        <dbReference type="ChEBI" id="CHEBI:33190"/>
        <dbReference type="ChEBI" id="CHEBI:57783"/>
        <dbReference type="ChEBI" id="CHEBI:58349"/>
        <dbReference type="EC" id="1.1.1.298"/>
    </reaction>
</comment>
<comment type="cofactor">
    <cofactor evidence="1">
        <name>FMN</name>
        <dbReference type="ChEBI" id="CHEBI:58210"/>
    </cofactor>
</comment>
<comment type="induction">
    <text evidence="1">Up-regulated by the nitrogen regulatory protein C (NtrC also called GlnG) and repressed by RutR.</text>
</comment>
<comment type="similarity">
    <text evidence="1">Belongs to the nitroreductase family. HadB/RutE subfamily.</text>
</comment>
<accession>Q0T626</accession>
<reference key="1">
    <citation type="journal article" date="2006" name="BMC Genomics">
        <title>Complete genome sequence of Shigella flexneri 5b and comparison with Shigella flexneri 2a.</title>
        <authorList>
            <person name="Nie H."/>
            <person name="Yang F."/>
            <person name="Zhang X."/>
            <person name="Yang J."/>
            <person name="Chen L."/>
            <person name="Wang J."/>
            <person name="Xiong Z."/>
            <person name="Peng J."/>
            <person name="Sun L."/>
            <person name="Dong J."/>
            <person name="Xue Y."/>
            <person name="Xu X."/>
            <person name="Chen S."/>
            <person name="Yao Z."/>
            <person name="Shen Y."/>
            <person name="Jin Q."/>
        </authorList>
    </citation>
    <scope>NUCLEOTIDE SEQUENCE [LARGE SCALE GENOMIC DNA]</scope>
    <source>
        <strain>8401</strain>
    </source>
</reference>
<protein>
    <recommendedName>
        <fullName evidence="1">Probable malonic semialdehyde reductase RutE</fullName>
        <ecNumber evidence="1">1.1.1.298</ecNumber>
    </recommendedName>
</protein>
<organism>
    <name type="scientific">Shigella flexneri serotype 5b (strain 8401)</name>
    <dbReference type="NCBI Taxonomy" id="373384"/>
    <lineage>
        <taxon>Bacteria</taxon>
        <taxon>Pseudomonadati</taxon>
        <taxon>Pseudomonadota</taxon>
        <taxon>Gammaproteobacteria</taxon>
        <taxon>Enterobacterales</taxon>
        <taxon>Enterobacteriaceae</taxon>
        <taxon>Shigella</taxon>
    </lineage>
</organism>